<comment type="function">
    <text evidence="1">Converts heme B (protoheme IX) to heme O by substitution of the vinyl group on carbon 2 of heme B porphyrin ring with a hydroxyethyl farnesyl side group.</text>
</comment>
<comment type="catalytic activity">
    <reaction evidence="1">
        <text>heme b + (2E,6E)-farnesyl diphosphate + H2O = Fe(II)-heme o + diphosphate</text>
        <dbReference type="Rhea" id="RHEA:28070"/>
        <dbReference type="ChEBI" id="CHEBI:15377"/>
        <dbReference type="ChEBI" id="CHEBI:33019"/>
        <dbReference type="ChEBI" id="CHEBI:60344"/>
        <dbReference type="ChEBI" id="CHEBI:60530"/>
        <dbReference type="ChEBI" id="CHEBI:175763"/>
        <dbReference type="EC" id="2.5.1.141"/>
    </reaction>
</comment>
<comment type="pathway">
    <text evidence="1">Porphyrin-containing compound metabolism; heme O biosynthesis; heme O from protoheme: step 1/1.</text>
</comment>
<comment type="subunit">
    <text evidence="1">Interacts with CtaA.</text>
</comment>
<comment type="subcellular location">
    <subcellularLocation>
        <location evidence="1">Cell membrane</location>
        <topology evidence="1">Multi-pass membrane protein</topology>
    </subcellularLocation>
</comment>
<comment type="miscellaneous">
    <text evidence="1">Carbon 2 of the heme B porphyrin ring is defined according to the Fischer nomenclature.</text>
</comment>
<comment type="similarity">
    <text evidence="1">Belongs to the UbiA prenyltransferase family. Protoheme IX farnesyltransferase subfamily.</text>
</comment>
<name>COXX_GEOTN</name>
<proteinExistence type="inferred from homology"/>
<organism>
    <name type="scientific">Geobacillus thermodenitrificans (strain NG80-2)</name>
    <dbReference type="NCBI Taxonomy" id="420246"/>
    <lineage>
        <taxon>Bacteria</taxon>
        <taxon>Bacillati</taxon>
        <taxon>Bacillota</taxon>
        <taxon>Bacilli</taxon>
        <taxon>Bacillales</taxon>
        <taxon>Anoxybacillaceae</taxon>
        <taxon>Geobacillus</taxon>
    </lineage>
</organism>
<protein>
    <recommendedName>
        <fullName evidence="1">Protoheme IX farnesyltransferase</fullName>
        <ecNumber evidence="1">2.5.1.141</ecNumber>
    </recommendedName>
    <alternativeName>
        <fullName evidence="1">Heme B farnesyltransferase</fullName>
    </alternativeName>
    <alternativeName>
        <fullName evidence="1">Heme O synthase</fullName>
    </alternativeName>
</protein>
<keyword id="KW-1003">Cell membrane</keyword>
<keyword id="KW-0350">Heme biosynthesis</keyword>
<keyword id="KW-0472">Membrane</keyword>
<keyword id="KW-0808">Transferase</keyword>
<keyword id="KW-0812">Transmembrane</keyword>
<keyword id="KW-1133">Transmembrane helix</keyword>
<reference key="1">
    <citation type="journal article" date="2007" name="Proc. Natl. Acad. Sci. U.S.A.">
        <title>Genome and proteome of long-chain alkane degrading Geobacillus thermodenitrificans NG80-2 isolated from a deep-subsurface oil reservoir.</title>
        <authorList>
            <person name="Feng L."/>
            <person name="Wang W."/>
            <person name="Cheng J."/>
            <person name="Ren Y."/>
            <person name="Zhao G."/>
            <person name="Gao C."/>
            <person name="Tang Y."/>
            <person name="Liu X."/>
            <person name="Han W."/>
            <person name="Peng X."/>
            <person name="Liu R."/>
            <person name="Wang L."/>
        </authorList>
    </citation>
    <scope>NUCLEOTIDE SEQUENCE [LARGE SCALE GENOMIC DNA]</scope>
    <source>
        <strain>NG80-2</strain>
    </source>
</reference>
<gene>
    <name evidence="1" type="primary">ctaB</name>
    <name type="ordered locus">GTNG_0946</name>
</gene>
<dbReference type="EC" id="2.5.1.141" evidence="1"/>
<dbReference type="EMBL" id="CP000557">
    <property type="protein sequence ID" value="ABO66324.1"/>
    <property type="molecule type" value="Genomic_DNA"/>
</dbReference>
<dbReference type="RefSeq" id="WP_008878726.1">
    <property type="nucleotide sequence ID" value="NC_009328.1"/>
</dbReference>
<dbReference type="SMR" id="A4ILX0"/>
<dbReference type="KEGG" id="gtn:GTNG_0946"/>
<dbReference type="eggNOG" id="COG0109">
    <property type="taxonomic scope" value="Bacteria"/>
</dbReference>
<dbReference type="HOGENOM" id="CLU_029631_0_0_9"/>
<dbReference type="UniPathway" id="UPA00834">
    <property type="reaction ID" value="UER00712"/>
</dbReference>
<dbReference type="Proteomes" id="UP000001578">
    <property type="component" value="Chromosome"/>
</dbReference>
<dbReference type="GO" id="GO:0005886">
    <property type="term" value="C:plasma membrane"/>
    <property type="evidence" value="ECO:0007669"/>
    <property type="project" value="UniProtKB-SubCell"/>
</dbReference>
<dbReference type="GO" id="GO:0008495">
    <property type="term" value="F:protoheme IX farnesyltransferase activity"/>
    <property type="evidence" value="ECO:0007669"/>
    <property type="project" value="UniProtKB-UniRule"/>
</dbReference>
<dbReference type="GO" id="GO:0048034">
    <property type="term" value="P:heme O biosynthetic process"/>
    <property type="evidence" value="ECO:0007669"/>
    <property type="project" value="UniProtKB-UniRule"/>
</dbReference>
<dbReference type="CDD" id="cd13957">
    <property type="entry name" value="PT_UbiA_Cox10"/>
    <property type="match status" value="1"/>
</dbReference>
<dbReference type="FunFam" id="1.10.357.140:FF:000001">
    <property type="entry name" value="Protoheme IX farnesyltransferase"/>
    <property type="match status" value="1"/>
</dbReference>
<dbReference type="Gene3D" id="1.10.357.140">
    <property type="entry name" value="UbiA prenyltransferase"/>
    <property type="match status" value="1"/>
</dbReference>
<dbReference type="HAMAP" id="MF_00154">
    <property type="entry name" value="CyoE_CtaB"/>
    <property type="match status" value="1"/>
</dbReference>
<dbReference type="InterPro" id="IPR006369">
    <property type="entry name" value="Protohaem_IX_farnesylTrfase"/>
</dbReference>
<dbReference type="InterPro" id="IPR000537">
    <property type="entry name" value="UbiA_prenyltransferase"/>
</dbReference>
<dbReference type="InterPro" id="IPR030470">
    <property type="entry name" value="UbiA_prenylTrfase_CS"/>
</dbReference>
<dbReference type="InterPro" id="IPR044878">
    <property type="entry name" value="UbiA_sf"/>
</dbReference>
<dbReference type="NCBIfam" id="TIGR01473">
    <property type="entry name" value="cyoE_ctaB"/>
    <property type="match status" value="1"/>
</dbReference>
<dbReference type="PANTHER" id="PTHR43448">
    <property type="entry name" value="PROTOHEME IX FARNESYLTRANSFERASE, MITOCHONDRIAL"/>
    <property type="match status" value="1"/>
</dbReference>
<dbReference type="PANTHER" id="PTHR43448:SF2">
    <property type="entry name" value="PROTOHEME IX FARNESYLTRANSFERASE, MITOCHONDRIAL"/>
    <property type="match status" value="1"/>
</dbReference>
<dbReference type="Pfam" id="PF01040">
    <property type="entry name" value="UbiA"/>
    <property type="match status" value="1"/>
</dbReference>
<dbReference type="PROSITE" id="PS00943">
    <property type="entry name" value="UBIA"/>
    <property type="match status" value="1"/>
</dbReference>
<accession>A4ILX0</accession>
<feature type="chain" id="PRO_0000327057" description="Protoheme IX farnesyltransferase">
    <location>
        <begin position="1"/>
        <end position="307"/>
    </location>
</feature>
<feature type="transmembrane region" description="Helical" evidence="1">
    <location>
        <begin position="33"/>
        <end position="53"/>
    </location>
</feature>
<feature type="transmembrane region" description="Helical" evidence="1">
    <location>
        <begin position="62"/>
        <end position="82"/>
    </location>
</feature>
<feature type="transmembrane region" description="Helical" evidence="1">
    <location>
        <begin position="111"/>
        <end position="131"/>
    </location>
</feature>
<feature type="transmembrane region" description="Helical" evidence="1">
    <location>
        <begin position="132"/>
        <end position="152"/>
    </location>
</feature>
<feature type="transmembrane region" description="Helical" evidence="1">
    <location>
        <begin position="159"/>
        <end position="179"/>
    </location>
</feature>
<feature type="transmembrane region" description="Helical" evidence="1">
    <location>
        <begin position="185"/>
        <end position="205"/>
    </location>
</feature>
<feature type="transmembrane region" description="Helical" evidence="1">
    <location>
        <begin position="229"/>
        <end position="249"/>
    </location>
</feature>
<feature type="transmembrane region" description="Helical" evidence="1">
    <location>
        <begin position="251"/>
        <end position="271"/>
    </location>
</feature>
<feature type="transmembrane region" description="Helical" evidence="1">
    <location>
        <begin position="287"/>
        <end position="307"/>
    </location>
</feature>
<evidence type="ECO:0000255" key="1">
    <source>
        <dbReference type="HAMAP-Rule" id="MF_00154"/>
    </source>
</evidence>
<sequence>MADLKAVQEADVRQRPQASIKLFWKELSAVVKIGIVNSNLITTFAGMWLAFYFTGERFLENLHIVFFTLFGAALVIAGSCSINNFIDRDIDQHMERTKTRPTVTGTMEPRRVLWLGVTLVAIGTMSLLMTTVTAAIVGLIGVVTYVFLYTLWTKRNYTLNTVVGSISGAVPPVIGWTAVDSDFHIVPLILFLIMFLWQPPHFLALAMKRCEEYRAAGIPMLPVVHGFEMTKRQIIVWVACLLPLPFYLFSLGIPFLIVATVLNVGWLLLGLWGLKMKDDIKWAKLMFVYSLNYLTILFVAMVIATIW</sequence>